<feature type="chain" id="PRO_0000119116" description="Kelch-like protein 13">
    <location>
        <begin position="1"/>
        <end position="654"/>
    </location>
</feature>
<feature type="domain" description="BTB" evidence="2">
    <location>
        <begin position="91"/>
        <end position="160"/>
    </location>
</feature>
<feature type="domain" description="BACK">
    <location>
        <begin position="195"/>
        <end position="296"/>
    </location>
</feature>
<feature type="repeat" description="Kelch 1">
    <location>
        <begin position="340"/>
        <end position="388"/>
    </location>
</feature>
<feature type="repeat" description="Kelch 2">
    <location>
        <begin position="389"/>
        <end position="440"/>
    </location>
</feature>
<feature type="repeat" description="Kelch 3">
    <location>
        <begin position="441"/>
        <end position="487"/>
    </location>
</feature>
<feature type="repeat" description="Kelch 4">
    <location>
        <begin position="489"/>
        <end position="534"/>
    </location>
</feature>
<feature type="repeat" description="Kelch 5">
    <location>
        <begin position="536"/>
        <end position="586"/>
    </location>
</feature>
<feature type="repeat" description="Kelch 6">
    <location>
        <begin position="587"/>
        <end position="635"/>
    </location>
</feature>
<feature type="splice variant" id="VSP_037534" description="In isoform 5." evidence="5">
    <location>
        <begin position="1"/>
        <end position="50"/>
    </location>
</feature>
<feature type="splice variant" id="VSP_037535" description="In isoform 2." evidence="3">
    <original>MPLKWKTSSPAIWKFPVPVLKTSRSTPLSPAYI</original>
    <variation>MLRFISHLYCCSSKEECSEDDKCILSR</variation>
    <location>
        <begin position="1"/>
        <end position="33"/>
    </location>
</feature>
<feature type="splice variant" id="VSP_037536" description="In isoform 3." evidence="4">
    <original>MPLKWKTSSPAIWKFPVPVLKTSRSTPLSPAYI</original>
    <variation>MDILHRGELVAAILRNR</variation>
    <location>
        <begin position="1"/>
        <end position="33"/>
    </location>
</feature>
<feature type="splice variant" id="VSP_037537" description="In isoform 4." evidence="5">
    <original>MPLKWKTSSPAIWKFPVPVLKTSRSTPLSPAYI</original>
    <variation>MEGEYFFEENPFLEFLLKL</variation>
    <location>
        <begin position="1"/>
        <end position="33"/>
    </location>
</feature>
<protein>
    <recommendedName>
        <fullName>Kelch-like protein 13</fullName>
    </recommendedName>
    <alternativeName>
        <fullName>BTB and kelch domain-containing protein 2</fullName>
    </alternativeName>
</protein>
<proteinExistence type="evidence at transcript level"/>
<sequence>MPLKWKTSSPAIWKFPVPVLKTSRSTPLSPAYISLVEEEDQHLKLCLGSEMGLSSHLQSCKAGSTRIFTSNSHSSVVLQGFDQLRLDGLLCDVTLMPGDTDDAYPVHRVMMASASDYFKAMFTGGMKEQELMCIKLHGVSRVGLRKIIDFIYTAKLSLNMDTLQDTLEAASFLQILPVLDFCKVFLISGVTLDNCVEVGRIANTYHLTEVDKYVNSFVLKNFAALLSTGEFLKLPFERLAFVLSSNSLKRCTELDLFKATCRWLRLEEPRMDVAAKLMKNIRFPLMTPQELINYVQTVDFMRTDNTCVNLLLEASNYQMMPFMQPVMQSDRTAIRSDTTRLVTLGGVLRQQLVVSKELRMYDEKTHEWKSLAPMDAPRYQHGIAVIGNFLYVVGGQSNYDTKGKTAVDTVFRFDPRYNKWIQVASLNEKRTFFHLSALKGFLYAVGGRNAAGELPTVECYNPRTNEWTYVAKMNEPHYGHAGTVYGGVMYISGGITHDTFQKELMCFDPDTDKWTQKAPMTTVRGLHCMCTVGDRLYVIGGNHFRGTSDYDDVLSCEYYSPILDQWTPIASMLRGQSDVGVAVFENKIYVVGGYSWNNRCMVEIVQKYDPEKNEWHKVFDLPESLGGIRACTLTVYPPEEATPSPSRESPLSGP</sequence>
<comment type="function">
    <text evidence="1">Substrate-specific adapter of a BCR (BTB-CUL3-RBX1) E3 ubiquitin-protein ligase complex required for mitotic progression and cytokinesis. The BCR(KLHL9-KLHL13) E3 ubiquitin ligase complex mediates the ubiquitination of AURKB and controls the dynamic behavior of AURKB on mitotic chromosomes and thereby coordinates faithful mitotic progression and completion of cytokinesis (By similarity).</text>
</comment>
<comment type="pathway">
    <text>Protein modification; protein ubiquitination.</text>
</comment>
<comment type="subunit">
    <text evidence="1">Component of the BCR(KLHL9-KLHL13) E3 ubiquitin ligase complex, at least composed of CUL3, KLHL9, KLHL13 and RBX1. Interacts with AURKB (By similarity).</text>
</comment>
<comment type="alternative products">
    <event type="alternative splicing"/>
    <isoform>
        <id>Q80TF4-1</id>
        <name>1</name>
        <sequence type="displayed"/>
    </isoform>
    <isoform>
        <id>Q80TF4-2</id>
        <name>2</name>
        <sequence type="described" ref="VSP_037535"/>
    </isoform>
    <isoform>
        <id>Q80TF4-3</id>
        <name>3</name>
        <sequence type="described" ref="VSP_037536"/>
    </isoform>
    <isoform>
        <id>Q80TF4-4</id>
        <name>4</name>
        <sequence type="described" ref="VSP_037537"/>
    </isoform>
    <isoform>
        <id>Q80TF4-5</id>
        <name>5</name>
        <sequence type="described" ref="VSP_037534"/>
    </isoform>
</comment>
<comment type="sequence caution" evidence="5">
    <conflict type="erroneous initiation">
        <sequence resource="EMBL-CDS" id="BAC65773"/>
    </conflict>
</comment>
<name>KLH13_MOUSE</name>
<gene>
    <name type="primary">Klhl13</name>
    <name type="synonym">Bklhd2</name>
    <name type="synonym">Kiaa1309</name>
</gene>
<keyword id="KW-0025">Alternative splicing</keyword>
<keyword id="KW-0131">Cell cycle</keyword>
<keyword id="KW-0132">Cell division</keyword>
<keyword id="KW-0880">Kelch repeat</keyword>
<keyword id="KW-0498">Mitosis</keyword>
<keyword id="KW-1185">Reference proteome</keyword>
<keyword id="KW-0677">Repeat</keyword>
<keyword id="KW-0833">Ubl conjugation pathway</keyword>
<organism>
    <name type="scientific">Mus musculus</name>
    <name type="common">Mouse</name>
    <dbReference type="NCBI Taxonomy" id="10090"/>
    <lineage>
        <taxon>Eukaryota</taxon>
        <taxon>Metazoa</taxon>
        <taxon>Chordata</taxon>
        <taxon>Craniata</taxon>
        <taxon>Vertebrata</taxon>
        <taxon>Euteleostomi</taxon>
        <taxon>Mammalia</taxon>
        <taxon>Eutheria</taxon>
        <taxon>Euarchontoglires</taxon>
        <taxon>Glires</taxon>
        <taxon>Rodentia</taxon>
        <taxon>Myomorpha</taxon>
        <taxon>Muroidea</taxon>
        <taxon>Muridae</taxon>
        <taxon>Murinae</taxon>
        <taxon>Mus</taxon>
        <taxon>Mus</taxon>
    </lineage>
</organism>
<accession>Q80TF4</accession>
<accession>A2AL86</accession>
<accession>A2AL87</accession>
<accession>A2AL88</accession>
<accession>A2AL89</accession>
<accession>Q9DBY7</accession>
<reference key="1">
    <citation type="journal article" date="2003" name="DNA Res.">
        <title>Prediction of the coding sequences of mouse homologues of KIAA gene: II. The complete nucleotide sequences of 400 mouse KIAA-homologous cDNAs identified by screening of terminal sequences of cDNA clones randomly sampled from size-fractionated libraries.</title>
        <authorList>
            <person name="Okazaki N."/>
            <person name="Kikuno R."/>
            <person name="Ohara R."/>
            <person name="Inamoto S."/>
            <person name="Aizawa H."/>
            <person name="Yuasa S."/>
            <person name="Nakajima D."/>
            <person name="Nagase T."/>
            <person name="Ohara O."/>
            <person name="Koga H."/>
        </authorList>
    </citation>
    <scope>NUCLEOTIDE SEQUENCE [LARGE SCALE MRNA] (ISOFORM 2)</scope>
    <source>
        <tissue>Brain</tissue>
    </source>
</reference>
<reference key="2">
    <citation type="journal article" date="2005" name="Science">
        <title>The transcriptional landscape of the mammalian genome.</title>
        <authorList>
            <person name="Carninci P."/>
            <person name="Kasukawa T."/>
            <person name="Katayama S."/>
            <person name="Gough J."/>
            <person name="Frith M.C."/>
            <person name="Maeda N."/>
            <person name="Oyama R."/>
            <person name="Ravasi T."/>
            <person name="Lenhard B."/>
            <person name="Wells C."/>
            <person name="Kodzius R."/>
            <person name="Shimokawa K."/>
            <person name="Bajic V.B."/>
            <person name="Brenner S.E."/>
            <person name="Batalov S."/>
            <person name="Forrest A.R."/>
            <person name="Zavolan M."/>
            <person name="Davis M.J."/>
            <person name="Wilming L.G."/>
            <person name="Aidinis V."/>
            <person name="Allen J.E."/>
            <person name="Ambesi-Impiombato A."/>
            <person name="Apweiler R."/>
            <person name="Aturaliya R.N."/>
            <person name="Bailey T.L."/>
            <person name="Bansal M."/>
            <person name="Baxter L."/>
            <person name="Beisel K.W."/>
            <person name="Bersano T."/>
            <person name="Bono H."/>
            <person name="Chalk A.M."/>
            <person name="Chiu K.P."/>
            <person name="Choudhary V."/>
            <person name="Christoffels A."/>
            <person name="Clutterbuck D.R."/>
            <person name="Crowe M.L."/>
            <person name="Dalla E."/>
            <person name="Dalrymple B.P."/>
            <person name="de Bono B."/>
            <person name="Della Gatta G."/>
            <person name="di Bernardo D."/>
            <person name="Down T."/>
            <person name="Engstrom P."/>
            <person name="Fagiolini M."/>
            <person name="Faulkner G."/>
            <person name="Fletcher C.F."/>
            <person name="Fukushima T."/>
            <person name="Furuno M."/>
            <person name="Futaki S."/>
            <person name="Gariboldi M."/>
            <person name="Georgii-Hemming P."/>
            <person name="Gingeras T.R."/>
            <person name="Gojobori T."/>
            <person name="Green R.E."/>
            <person name="Gustincich S."/>
            <person name="Harbers M."/>
            <person name="Hayashi Y."/>
            <person name="Hensch T.K."/>
            <person name="Hirokawa N."/>
            <person name="Hill D."/>
            <person name="Huminiecki L."/>
            <person name="Iacono M."/>
            <person name="Ikeo K."/>
            <person name="Iwama A."/>
            <person name="Ishikawa T."/>
            <person name="Jakt M."/>
            <person name="Kanapin A."/>
            <person name="Katoh M."/>
            <person name="Kawasawa Y."/>
            <person name="Kelso J."/>
            <person name="Kitamura H."/>
            <person name="Kitano H."/>
            <person name="Kollias G."/>
            <person name="Krishnan S.P."/>
            <person name="Kruger A."/>
            <person name="Kummerfeld S.K."/>
            <person name="Kurochkin I.V."/>
            <person name="Lareau L.F."/>
            <person name="Lazarevic D."/>
            <person name="Lipovich L."/>
            <person name="Liu J."/>
            <person name="Liuni S."/>
            <person name="McWilliam S."/>
            <person name="Madan Babu M."/>
            <person name="Madera M."/>
            <person name="Marchionni L."/>
            <person name="Matsuda H."/>
            <person name="Matsuzawa S."/>
            <person name="Miki H."/>
            <person name="Mignone F."/>
            <person name="Miyake S."/>
            <person name="Morris K."/>
            <person name="Mottagui-Tabar S."/>
            <person name="Mulder N."/>
            <person name="Nakano N."/>
            <person name="Nakauchi H."/>
            <person name="Ng P."/>
            <person name="Nilsson R."/>
            <person name="Nishiguchi S."/>
            <person name="Nishikawa S."/>
            <person name="Nori F."/>
            <person name="Ohara O."/>
            <person name="Okazaki Y."/>
            <person name="Orlando V."/>
            <person name="Pang K.C."/>
            <person name="Pavan W.J."/>
            <person name="Pavesi G."/>
            <person name="Pesole G."/>
            <person name="Petrovsky N."/>
            <person name="Piazza S."/>
            <person name="Reed J."/>
            <person name="Reid J.F."/>
            <person name="Ring B.Z."/>
            <person name="Ringwald M."/>
            <person name="Rost B."/>
            <person name="Ruan Y."/>
            <person name="Salzberg S.L."/>
            <person name="Sandelin A."/>
            <person name="Schneider C."/>
            <person name="Schoenbach C."/>
            <person name="Sekiguchi K."/>
            <person name="Semple C.A."/>
            <person name="Seno S."/>
            <person name="Sessa L."/>
            <person name="Sheng Y."/>
            <person name="Shibata Y."/>
            <person name="Shimada H."/>
            <person name="Shimada K."/>
            <person name="Silva D."/>
            <person name="Sinclair B."/>
            <person name="Sperling S."/>
            <person name="Stupka E."/>
            <person name="Sugiura K."/>
            <person name="Sultana R."/>
            <person name="Takenaka Y."/>
            <person name="Taki K."/>
            <person name="Tammoja K."/>
            <person name="Tan S.L."/>
            <person name="Tang S."/>
            <person name="Taylor M.S."/>
            <person name="Tegner J."/>
            <person name="Teichmann S.A."/>
            <person name="Ueda H.R."/>
            <person name="van Nimwegen E."/>
            <person name="Verardo R."/>
            <person name="Wei C.L."/>
            <person name="Yagi K."/>
            <person name="Yamanishi H."/>
            <person name="Zabarovsky E."/>
            <person name="Zhu S."/>
            <person name="Zimmer A."/>
            <person name="Hide W."/>
            <person name="Bult C."/>
            <person name="Grimmond S.M."/>
            <person name="Teasdale R.D."/>
            <person name="Liu E.T."/>
            <person name="Brusic V."/>
            <person name="Quackenbush J."/>
            <person name="Wahlestedt C."/>
            <person name="Mattick J.S."/>
            <person name="Hume D.A."/>
            <person name="Kai C."/>
            <person name="Sasaki D."/>
            <person name="Tomaru Y."/>
            <person name="Fukuda S."/>
            <person name="Kanamori-Katayama M."/>
            <person name="Suzuki M."/>
            <person name="Aoki J."/>
            <person name="Arakawa T."/>
            <person name="Iida J."/>
            <person name="Imamura K."/>
            <person name="Itoh M."/>
            <person name="Kato T."/>
            <person name="Kawaji H."/>
            <person name="Kawagashira N."/>
            <person name="Kawashima T."/>
            <person name="Kojima M."/>
            <person name="Kondo S."/>
            <person name="Konno H."/>
            <person name="Nakano K."/>
            <person name="Ninomiya N."/>
            <person name="Nishio T."/>
            <person name="Okada M."/>
            <person name="Plessy C."/>
            <person name="Shibata K."/>
            <person name="Shiraki T."/>
            <person name="Suzuki S."/>
            <person name="Tagami M."/>
            <person name="Waki K."/>
            <person name="Watahiki A."/>
            <person name="Okamura-Oho Y."/>
            <person name="Suzuki H."/>
            <person name="Kawai J."/>
            <person name="Hayashizaki Y."/>
        </authorList>
    </citation>
    <scope>NUCLEOTIDE SEQUENCE [LARGE SCALE MRNA] (ISOFORM 3)</scope>
    <source>
        <strain>C57BL/6J</strain>
        <tissue>Lung</tissue>
    </source>
</reference>
<reference key="3">
    <citation type="journal article" date="2009" name="PLoS Biol.">
        <title>Lineage-specific biology revealed by a finished genome assembly of the mouse.</title>
        <authorList>
            <person name="Church D.M."/>
            <person name="Goodstadt L."/>
            <person name="Hillier L.W."/>
            <person name="Zody M.C."/>
            <person name="Goldstein S."/>
            <person name="She X."/>
            <person name="Bult C.J."/>
            <person name="Agarwala R."/>
            <person name="Cherry J.L."/>
            <person name="DiCuccio M."/>
            <person name="Hlavina W."/>
            <person name="Kapustin Y."/>
            <person name="Meric P."/>
            <person name="Maglott D."/>
            <person name="Birtle Z."/>
            <person name="Marques A.C."/>
            <person name="Graves T."/>
            <person name="Zhou S."/>
            <person name="Teague B."/>
            <person name="Potamousis K."/>
            <person name="Churas C."/>
            <person name="Place M."/>
            <person name="Herschleb J."/>
            <person name="Runnheim R."/>
            <person name="Forrest D."/>
            <person name="Amos-Landgraf J."/>
            <person name="Schwartz D.C."/>
            <person name="Cheng Z."/>
            <person name="Lindblad-Toh K."/>
            <person name="Eichler E.E."/>
            <person name="Ponting C.P."/>
        </authorList>
    </citation>
    <scope>NUCLEOTIDE SEQUENCE [LARGE SCALE GENOMIC DNA]</scope>
    <source>
        <strain>C57BL/6J</strain>
    </source>
</reference>
<evidence type="ECO:0000250" key="1"/>
<evidence type="ECO:0000255" key="2">
    <source>
        <dbReference type="PROSITE-ProRule" id="PRU00037"/>
    </source>
</evidence>
<evidence type="ECO:0000303" key="3">
    <source>
    </source>
</evidence>
<evidence type="ECO:0000303" key="4">
    <source>
    </source>
</evidence>
<evidence type="ECO:0000305" key="5"/>
<dbReference type="EMBL" id="AK122491">
    <property type="protein sequence ID" value="BAC65773.1"/>
    <property type="status" value="ALT_INIT"/>
    <property type="molecule type" value="mRNA"/>
</dbReference>
<dbReference type="EMBL" id="AK004677">
    <property type="protein sequence ID" value="BAB23465.1"/>
    <property type="molecule type" value="mRNA"/>
</dbReference>
<dbReference type="EMBL" id="AL773552">
    <property type="status" value="NOT_ANNOTATED_CDS"/>
    <property type="molecule type" value="Genomic_DNA"/>
</dbReference>
<dbReference type="CCDS" id="CCDS40891.1">
    <molecule id="Q80TF4-3"/>
</dbReference>
<dbReference type="CCDS" id="CCDS72348.1">
    <molecule id="Q80TF4-2"/>
</dbReference>
<dbReference type="CCDS" id="CCDS81105.1">
    <molecule id="Q80TF4-4"/>
</dbReference>
<dbReference type="RefSeq" id="NP_001277405.1">
    <molecule id="Q80TF4-2"/>
    <property type="nucleotide sequence ID" value="NM_001290476.2"/>
</dbReference>
<dbReference type="RefSeq" id="NP_001297395.1">
    <molecule id="Q80TF4-4"/>
    <property type="nucleotide sequence ID" value="NM_001310466.1"/>
</dbReference>
<dbReference type="RefSeq" id="NP_001368822.1">
    <molecule id="Q80TF4-1"/>
    <property type="nucleotide sequence ID" value="NM_001381893.1"/>
</dbReference>
<dbReference type="RefSeq" id="NP_001368823.1">
    <molecule id="Q80TF4-1"/>
    <property type="nucleotide sequence ID" value="NM_001381894.1"/>
</dbReference>
<dbReference type="RefSeq" id="NP_001368824.1">
    <molecule id="Q80TF4-3"/>
    <property type="nucleotide sequence ID" value="NM_001381895.1"/>
</dbReference>
<dbReference type="RefSeq" id="NP_001368825.1">
    <molecule id="Q80TF4-3"/>
    <property type="nucleotide sequence ID" value="NM_001381896.1"/>
</dbReference>
<dbReference type="RefSeq" id="NP_080443.1">
    <molecule id="Q80TF4-3"/>
    <property type="nucleotide sequence ID" value="NM_026167.4"/>
</dbReference>
<dbReference type="RefSeq" id="XP_011245791.1">
    <property type="nucleotide sequence ID" value="XM_011247489.2"/>
</dbReference>
<dbReference type="RefSeq" id="XP_011245794.1">
    <molecule id="Q80TF4-3"/>
    <property type="nucleotide sequence ID" value="XM_011247492.4"/>
</dbReference>
<dbReference type="RefSeq" id="XP_011245795.1">
    <property type="nucleotide sequence ID" value="XM_011247493.2"/>
</dbReference>
<dbReference type="RefSeq" id="XP_011245796.1">
    <property type="nucleotide sequence ID" value="XM_011247494.2"/>
</dbReference>
<dbReference type="RefSeq" id="XP_017174099.1">
    <property type="nucleotide sequence ID" value="XM_017318610.1"/>
</dbReference>
<dbReference type="RefSeq" id="XP_030107351.1">
    <molecule id="Q80TF4-1"/>
    <property type="nucleotide sequence ID" value="XM_030251491.2"/>
</dbReference>
<dbReference type="RefSeq" id="XP_036017973.1">
    <molecule id="Q80TF4-3"/>
    <property type="nucleotide sequence ID" value="XM_036162080.1"/>
</dbReference>
<dbReference type="RefSeq" id="XP_036017974.1">
    <molecule id="Q80TF4-3"/>
    <property type="nucleotide sequence ID" value="XM_036162081.1"/>
</dbReference>
<dbReference type="RefSeq" id="XP_036017975.1">
    <molecule id="Q80TF4-5"/>
    <property type="nucleotide sequence ID" value="XM_036162082.1"/>
</dbReference>
<dbReference type="SMR" id="Q80TF4"/>
<dbReference type="FunCoup" id="Q80TF4">
    <property type="interactions" value="245"/>
</dbReference>
<dbReference type="IntAct" id="Q80TF4">
    <property type="interactions" value="2"/>
</dbReference>
<dbReference type="MINT" id="Q80TF4"/>
<dbReference type="STRING" id="10090.ENSMUSP00000110974"/>
<dbReference type="GlyGen" id="Q80TF4">
    <property type="glycosylation" value="1 site"/>
</dbReference>
<dbReference type="iPTMnet" id="Q80TF4"/>
<dbReference type="PhosphoSitePlus" id="Q80TF4"/>
<dbReference type="PaxDb" id="10090-ENSMUSP00000110972"/>
<dbReference type="ProteomicsDB" id="264770">
    <molecule id="Q80TF4-1"/>
</dbReference>
<dbReference type="ProteomicsDB" id="264771">
    <molecule id="Q80TF4-2"/>
</dbReference>
<dbReference type="ProteomicsDB" id="264772">
    <molecule id="Q80TF4-3"/>
</dbReference>
<dbReference type="ProteomicsDB" id="264773">
    <molecule id="Q80TF4-4"/>
</dbReference>
<dbReference type="ProteomicsDB" id="264774">
    <molecule id="Q80TF4-5"/>
</dbReference>
<dbReference type="Antibodypedia" id="29658">
    <property type="antibodies" value="138 antibodies from 24 providers"/>
</dbReference>
<dbReference type="DNASU" id="67455"/>
<dbReference type="Ensembl" id="ENSMUST00000035973.5">
    <molecule id="Q80TF4-3"/>
    <property type="protein sequence ID" value="ENSMUSP00000041190.5"/>
    <property type="gene ID" value="ENSMUSG00000036782.14"/>
</dbReference>
<dbReference type="Ensembl" id="ENSMUST00000115313.8">
    <molecule id="Q80TF4-5"/>
    <property type="protein sequence ID" value="ENSMUSP00000110968.2"/>
    <property type="gene ID" value="ENSMUSG00000036782.14"/>
</dbReference>
<dbReference type="Ensembl" id="ENSMUST00000115316.9">
    <molecule id="Q80TF4-4"/>
    <property type="protein sequence ID" value="ENSMUSP00000110971.3"/>
    <property type="gene ID" value="ENSMUSG00000036782.14"/>
</dbReference>
<dbReference type="Ensembl" id="ENSMUST00000115317.9">
    <molecule id="Q80TF4-1"/>
    <property type="protein sequence ID" value="ENSMUSP00000110972.3"/>
    <property type="gene ID" value="ENSMUSG00000036782.14"/>
</dbReference>
<dbReference type="Ensembl" id="ENSMUST00000115319.9">
    <molecule id="Q80TF4-2"/>
    <property type="protein sequence ID" value="ENSMUSP00000110974.3"/>
    <property type="gene ID" value="ENSMUSG00000036782.14"/>
</dbReference>
<dbReference type="GeneID" id="67455"/>
<dbReference type="KEGG" id="mmu:67455"/>
<dbReference type="UCSC" id="uc009sut.1">
    <molecule id="Q80TF4-2"/>
    <property type="organism name" value="mouse"/>
</dbReference>
<dbReference type="UCSC" id="uc009suu.1">
    <molecule id="Q80TF4-3"/>
    <property type="organism name" value="mouse"/>
</dbReference>
<dbReference type="AGR" id="MGI:1914705"/>
<dbReference type="CTD" id="90293"/>
<dbReference type="MGI" id="MGI:1914705">
    <property type="gene designation" value="Klhl13"/>
</dbReference>
<dbReference type="VEuPathDB" id="HostDB:ENSMUSG00000036782"/>
<dbReference type="eggNOG" id="KOG4441">
    <property type="taxonomic scope" value="Eukaryota"/>
</dbReference>
<dbReference type="GeneTree" id="ENSGT00940000154359"/>
<dbReference type="HOGENOM" id="CLU_004253_14_3_1"/>
<dbReference type="InParanoid" id="Q80TF4"/>
<dbReference type="OMA" id="XGITHDT"/>
<dbReference type="OrthoDB" id="1925334at2759"/>
<dbReference type="PhylomeDB" id="Q80TF4"/>
<dbReference type="TreeFam" id="TF328485"/>
<dbReference type="Reactome" id="R-MMU-8951664">
    <property type="pathway name" value="Neddylation"/>
</dbReference>
<dbReference type="Reactome" id="R-MMU-983168">
    <property type="pathway name" value="Antigen processing: Ubiquitination &amp; Proteasome degradation"/>
</dbReference>
<dbReference type="UniPathway" id="UPA00143"/>
<dbReference type="BioGRID-ORCS" id="67455">
    <property type="hits" value="2 hits in 78 CRISPR screens"/>
</dbReference>
<dbReference type="ChiTaRS" id="Klhl13">
    <property type="organism name" value="mouse"/>
</dbReference>
<dbReference type="PRO" id="PR:Q80TF4"/>
<dbReference type="Proteomes" id="UP000000589">
    <property type="component" value="Chromosome X"/>
</dbReference>
<dbReference type="RNAct" id="Q80TF4">
    <property type="molecule type" value="protein"/>
</dbReference>
<dbReference type="Bgee" id="ENSMUSG00000036782">
    <property type="expression patterns" value="Expressed in caudate-putamen and 247 other cell types or tissues"/>
</dbReference>
<dbReference type="GO" id="GO:0031463">
    <property type="term" value="C:Cul3-RING ubiquitin ligase complex"/>
    <property type="evidence" value="ECO:0000250"/>
    <property type="project" value="UniProtKB"/>
</dbReference>
<dbReference type="GO" id="GO:0004842">
    <property type="term" value="F:ubiquitin-protein transferase activity"/>
    <property type="evidence" value="ECO:0007669"/>
    <property type="project" value="Ensembl"/>
</dbReference>
<dbReference type="GO" id="GO:0051301">
    <property type="term" value="P:cell division"/>
    <property type="evidence" value="ECO:0007669"/>
    <property type="project" value="UniProtKB-KW"/>
</dbReference>
<dbReference type="GO" id="GO:0016567">
    <property type="term" value="P:protein ubiquitination"/>
    <property type="evidence" value="ECO:0000250"/>
    <property type="project" value="UniProtKB"/>
</dbReference>
<dbReference type="GO" id="GO:0032465">
    <property type="term" value="P:regulation of cytokinesis"/>
    <property type="evidence" value="ECO:0000250"/>
    <property type="project" value="UniProtKB"/>
</dbReference>
<dbReference type="CDD" id="cd18449">
    <property type="entry name" value="BACK_KLHL9_13"/>
    <property type="match status" value="1"/>
</dbReference>
<dbReference type="CDD" id="cd18239">
    <property type="entry name" value="BTB_POZ_KLHL9_13"/>
    <property type="match status" value="1"/>
</dbReference>
<dbReference type="FunFam" id="1.25.40.420:FF:000002">
    <property type="entry name" value="Kelch-like family member 13"/>
    <property type="match status" value="1"/>
</dbReference>
<dbReference type="FunFam" id="2.120.10.80:FF:000001">
    <property type="entry name" value="Kelch-like family member 13"/>
    <property type="match status" value="1"/>
</dbReference>
<dbReference type="FunFam" id="3.30.710.10:FF:000011">
    <property type="entry name" value="Kelch-like family member 13"/>
    <property type="match status" value="1"/>
</dbReference>
<dbReference type="Gene3D" id="1.25.40.420">
    <property type="match status" value="1"/>
</dbReference>
<dbReference type="Gene3D" id="2.120.10.80">
    <property type="entry name" value="Kelch-type beta propeller"/>
    <property type="match status" value="1"/>
</dbReference>
<dbReference type="Gene3D" id="3.30.710.10">
    <property type="entry name" value="Potassium Channel Kv1.1, Chain A"/>
    <property type="match status" value="1"/>
</dbReference>
<dbReference type="InterPro" id="IPR011705">
    <property type="entry name" value="BACK"/>
</dbReference>
<dbReference type="InterPro" id="IPR017096">
    <property type="entry name" value="BTB-kelch_protein"/>
</dbReference>
<dbReference type="InterPro" id="IPR000210">
    <property type="entry name" value="BTB/POZ_dom"/>
</dbReference>
<dbReference type="InterPro" id="IPR015915">
    <property type="entry name" value="Kelch-typ_b-propeller"/>
</dbReference>
<dbReference type="InterPro" id="IPR006652">
    <property type="entry name" value="Kelch_1"/>
</dbReference>
<dbReference type="InterPro" id="IPR011333">
    <property type="entry name" value="SKP1/BTB/POZ_sf"/>
</dbReference>
<dbReference type="PANTHER" id="PTHR45632:SF7">
    <property type="entry name" value="KELCH-LIKE PROTEIN 13"/>
    <property type="match status" value="1"/>
</dbReference>
<dbReference type="PANTHER" id="PTHR45632">
    <property type="entry name" value="LD33804P"/>
    <property type="match status" value="1"/>
</dbReference>
<dbReference type="Pfam" id="PF07707">
    <property type="entry name" value="BACK"/>
    <property type="match status" value="1"/>
</dbReference>
<dbReference type="Pfam" id="PF00651">
    <property type="entry name" value="BTB"/>
    <property type="match status" value="1"/>
</dbReference>
<dbReference type="Pfam" id="PF01344">
    <property type="entry name" value="Kelch_1"/>
    <property type="match status" value="1"/>
</dbReference>
<dbReference type="Pfam" id="PF24681">
    <property type="entry name" value="Kelch_KLHDC2_KLHL20_DRC7"/>
    <property type="match status" value="1"/>
</dbReference>
<dbReference type="PIRSF" id="PIRSF037037">
    <property type="entry name" value="Kelch-like_protein_gigaxonin"/>
    <property type="match status" value="1"/>
</dbReference>
<dbReference type="SMART" id="SM00875">
    <property type="entry name" value="BACK"/>
    <property type="match status" value="1"/>
</dbReference>
<dbReference type="SMART" id="SM00225">
    <property type="entry name" value="BTB"/>
    <property type="match status" value="1"/>
</dbReference>
<dbReference type="SMART" id="SM00612">
    <property type="entry name" value="Kelch"/>
    <property type="match status" value="6"/>
</dbReference>
<dbReference type="SUPFAM" id="SSF117281">
    <property type="entry name" value="Kelch motif"/>
    <property type="match status" value="1"/>
</dbReference>
<dbReference type="SUPFAM" id="SSF54695">
    <property type="entry name" value="POZ domain"/>
    <property type="match status" value="1"/>
</dbReference>
<dbReference type="PROSITE" id="PS50097">
    <property type="entry name" value="BTB"/>
    <property type="match status" value="1"/>
</dbReference>